<dbReference type="EC" id="7.1.2.2" evidence="1"/>
<dbReference type="EMBL" id="X72497">
    <property type="protein sequence ID" value="CAA51161.1"/>
    <property type="molecule type" value="Genomic_DNA"/>
</dbReference>
<dbReference type="EMBL" id="Z67753">
    <property type="protein sequence ID" value="CAA91739.1"/>
    <property type="molecule type" value="Genomic_DNA"/>
</dbReference>
<dbReference type="PIR" id="S78366">
    <property type="entry name" value="S78366"/>
</dbReference>
<dbReference type="RefSeq" id="NP_043707.1">
    <property type="nucleotide sequence ID" value="NC_001713.1"/>
</dbReference>
<dbReference type="SMR" id="P49647"/>
<dbReference type="GeneID" id="801750"/>
<dbReference type="GO" id="GO:0009535">
    <property type="term" value="C:chloroplast thylakoid membrane"/>
    <property type="evidence" value="ECO:0007669"/>
    <property type="project" value="UniProtKB-SubCell"/>
</dbReference>
<dbReference type="GO" id="GO:0005739">
    <property type="term" value="C:mitochondrion"/>
    <property type="evidence" value="ECO:0007669"/>
    <property type="project" value="GOC"/>
</dbReference>
<dbReference type="GO" id="GO:0045259">
    <property type="term" value="C:proton-transporting ATP synthase complex"/>
    <property type="evidence" value="ECO:0007669"/>
    <property type="project" value="UniProtKB-KW"/>
</dbReference>
<dbReference type="GO" id="GO:0005524">
    <property type="term" value="F:ATP binding"/>
    <property type="evidence" value="ECO:0007669"/>
    <property type="project" value="UniProtKB-UniRule"/>
</dbReference>
<dbReference type="GO" id="GO:0016887">
    <property type="term" value="F:ATP hydrolysis activity"/>
    <property type="evidence" value="ECO:0007669"/>
    <property type="project" value="InterPro"/>
</dbReference>
<dbReference type="GO" id="GO:0046933">
    <property type="term" value="F:proton-transporting ATP synthase activity, rotational mechanism"/>
    <property type="evidence" value="ECO:0007669"/>
    <property type="project" value="UniProtKB-UniRule"/>
</dbReference>
<dbReference type="GO" id="GO:0042776">
    <property type="term" value="P:proton motive force-driven mitochondrial ATP synthesis"/>
    <property type="evidence" value="ECO:0007669"/>
    <property type="project" value="TreeGrafter"/>
</dbReference>
<dbReference type="CDD" id="cd18110">
    <property type="entry name" value="ATP-synt_F1_beta_C"/>
    <property type="match status" value="1"/>
</dbReference>
<dbReference type="CDD" id="cd18115">
    <property type="entry name" value="ATP-synt_F1_beta_N"/>
    <property type="match status" value="1"/>
</dbReference>
<dbReference type="CDD" id="cd01133">
    <property type="entry name" value="F1-ATPase_beta_CD"/>
    <property type="match status" value="1"/>
</dbReference>
<dbReference type="FunFam" id="1.10.1140.10:FF:000001">
    <property type="entry name" value="ATP synthase subunit beta"/>
    <property type="match status" value="1"/>
</dbReference>
<dbReference type="FunFam" id="3.40.50.12240:FF:000006">
    <property type="entry name" value="ATP synthase subunit beta"/>
    <property type="match status" value="1"/>
</dbReference>
<dbReference type="FunFam" id="3.40.50.300:FF:000026">
    <property type="entry name" value="ATP synthase subunit beta"/>
    <property type="match status" value="1"/>
</dbReference>
<dbReference type="Gene3D" id="2.40.10.170">
    <property type="match status" value="1"/>
</dbReference>
<dbReference type="Gene3D" id="1.10.1140.10">
    <property type="entry name" value="Bovine Mitochondrial F1-atpase, Atp Synthase Beta Chain, Chain D, domain 3"/>
    <property type="match status" value="1"/>
</dbReference>
<dbReference type="Gene3D" id="3.40.50.300">
    <property type="entry name" value="P-loop containing nucleotide triphosphate hydrolases"/>
    <property type="match status" value="1"/>
</dbReference>
<dbReference type="HAMAP" id="MF_01347">
    <property type="entry name" value="ATP_synth_beta_bact"/>
    <property type="match status" value="1"/>
</dbReference>
<dbReference type="InterPro" id="IPR003593">
    <property type="entry name" value="AAA+_ATPase"/>
</dbReference>
<dbReference type="InterPro" id="IPR055190">
    <property type="entry name" value="ATP-synt_VA_C"/>
</dbReference>
<dbReference type="InterPro" id="IPR005722">
    <property type="entry name" value="ATP_synth_F1_bsu"/>
</dbReference>
<dbReference type="InterPro" id="IPR020003">
    <property type="entry name" value="ATPase_a/bsu_AS"/>
</dbReference>
<dbReference type="InterPro" id="IPR050053">
    <property type="entry name" value="ATPase_alpha/beta_chains"/>
</dbReference>
<dbReference type="InterPro" id="IPR004100">
    <property type="entry name" value="ATPase_F1/V1/A1_a/bsu_N"/>
</dbReference>
<dbReference type="InterPro" id="IPR036121">
    <property type="entry name" value="ATPase_F1/V1/A1_a/bsu_N_sf"/>
</dbReference>
<dbReference type="InterPro" id="IPR000194">
    <property type="entry name" value="ATPase_F1/V1/A1_a/bsu_nucl-bd"/>
</dbReference>
<dbReference type="InterPro" id="IPR024034">
    <property type="entry name" value="ATPase_F1/V1_b/a_C"/>
</dbReference>
<dbReference type="InterPro" id="IPR027417">
    <property type="entry name" value="P-loop_NTPase"/>
</dbReference>
<dbReference type="NCBIfam" id="TIGR01039">
    <property type="entry name" value="atpD"/>
    <property type="match status" value="1"/>
</dbReference>
<dbReference type="PANTHER" id="PTHR15184">
    <property type="entry name" value="ATP SYNTHASE"/>
    <property type="match status" value="1"/>
</dbReference>
<dbReference type="PANTHER" id="PTHR15184:SF71">
    <property type="entry name" value="ATP SYNTHASE SUBUNIT BETA, MITOCHONDRIAL"/>
    <property type="match status" value="1"/>
</dbReference>
<dbReference type="Pfam" id="PF00006">
    <property type="entry name" value="ATP-synt_ab"/>
    <property type="match status" value="1"/>
</dbReference>
<dbReference type="Pfam" id="PF02874">
    <property type="entry name" value="ATP-synt_ab_N"/>
    <property type="match status" value="1"/>
</dbReference>
<dbReference type="Pfam" id="PF22919">
    <property type="entry name" value="ATP-synt_VA_C"/>
    <property type="match status" value="1"/>
</dbReference>
<dbReference type="SMART" id="SM00382">
    <property type="entry name" value="AAA"/>
    <property type="match status" value="1"/>
</dbReference>
<dbReference type="SUPFAM" id="SSF47917">
    <property type="entry name" value="C-terminal domain of alpha and beta subunits of F1 ATP synthase"/>
    <property type="match status" value="1"/>
</dbReference>
<dbReference type="SUPFAM" id="SSF50615">
    <property type="entry name" value="N-terminal domain of alpha and beta subunits of F1 ATP synthase"/>
    <property type="match status" value="1"/>
</dbReference>
<dbReference type="SUPFAM" id="SSF52540">
    <property type="entry name" value="P-loop containing nucleoside triphosphate hydrolases"/>
    <property type="match status" value="1"/>
</dbReference>
<dbReference type="PROSITE" id="PS00152">
    <property type="entry name" value="ATPASE_ALPHA_BETA"/>
    <property type="match status" value="1"/>
</dbReference>
<reference key="1">
    <citation type="submission" date="1993-05" db="EMBL/GenBank/DDBJ databases">
        <authorList>
            <person name="Kroth-Pancic P."/>
            <person name="Freier U."/>
            <person name="Strotmann H."/>
            <person name="Kowallik K.V."/>
        </authorList>
    </citation>
    <scope>NUCLEOTIDE SEQUENCE [GENOMIC DNA]</scope>
</reference>
<reference key="2">
    <citation type="journal article" date="1995" name="Plant Mol. Biol. Rep.">
        <title>The chloroplast genome of a chlorophyll a+c-containing alga, Odontella sinensis.</title>
        <authorList>
            <person name="Kowallik K.V."/>
            <person name="Stoebe B."/>
            <person name="Schaffran I."/>
            <person name="Kroth-Pancic P."/>
            <person name="Freier U."/>
        </authorList>
    </citation>
    <scope>NUCLEOTIDE SEQUENCE [LARGE SCALE GENOMIC DNA]</scope>
</reference>
<gene>
    <name evidence="1" type="primary">atpB</name>
</gene>
<sequence>MVKTNINKGYVNQIIGPVLDIEFPSGTLPPIYSALKIETEDGIGTVVEVQQLLGDNKVRAVSMRSTDGLKRGVEARDLGGPISVPVGISTLGRIFNVIGEPVDEQGDVSYDETLPIHREAPAFTELETKPSIFETGIKVVDLLAPYRRGGKIGLFGGAGVGKTVLIMELINNIAKAHGGVSVFGGVGERTREGNDLYEEMKESGVINENNFKESKVALVYGQMNEPPGARMRVGLTALTMAEYFRDVNKQDVLLFIDNIFRFTQAGSEVSALLGRMPSAVGYQPTLATEMGALQERITSTTQGSITSIQAVYVPADDLTDPAPATTFAHLDATTVLSRNLAAKGIYPAVDPLDSTSTMLQPGIVSGEHYEIAETVKETLQRYKELQDIIAILGIDELSEEDRLTVARARKVERFLSQPFFVAEIFTGSPGKYVSLEETIKGFTMVLKGELDELPEQAFYLVGNIDEAIAKAETLK</sequence>
<organism>
    <name type="scientific">Trieres chinensis</name>
    <name type="common">Marine centric diatom</name>
    <name type="synonym">Odontella sinensis</name>
    <dbReference type="NCBI Taxonomy" id="1514140"/>
    <lineage>
        <taxon>Eukaryota</taxon>
        <taxon>Sar</taxon>
        <taxon>Stramenopiles</taxon>
        <taxon>Ochrophyta</taxon>
        <taxon>Bacillariophyta</taxon>
        <taxon>Mediophyceae</taxon>
        <taxon>Biddulphiophycidae</taxon>
        <taxon>Eupodiscales</taxon>
        <taxon>Parodontellaceae</taxon>
        <taxon>Trieres</taxon>
    </lineage>
</organism>
<protein>
    <recommendedName>
        <fullName evidence="1">ATP synthase subunit beta, chloroplastic</fullName>
        <ecNumber evidence="1">7.1.2.2</ecNumber>
    </recommendedName>
    <alternativeName>
        <fullName evidence="1">ATP synthase F1 sector subunit beta</fullName>
    </alternativeName>
    <alternativeName>
        <fullName evidence="1">F-ATPase subunit beta</fullName>
    </alternativeName>
</protein>
<proteinExistence type="inferred from homology"/>
<name>ATPB_TRICV</name>
<keyword id="KW-0066">ATP synthesis</keyword>
<keyword id="KW-0067">ATP-binding</keyword>
<keyword id="KW-0139">CF(1)</keyword>
<keyword id="KW-0150">Chloroplast</keyword>
<keyword id="KW-0375">Hydrogen ion transport</keyword>
<keyword id="KW-0406">Ion transport</keyword>
<keyword id="KW-0472">Membrane</keyword>
<keyword id="KW-0547">Nucleotide-binding</keyword>
<keyword id="KW-0934">Plastid</keyword>
<keyword id="KW-0793">Thylakoid</keyword>
<keyword id="KW-1278">Translocase</keyword>
<keyword id="KW-0813">Transport</keyword>
<evidence type="ECO:0000255" key="1">
    <source>
        <dbReference type="HAMAP-Rule" id="MF_01347"/>
    </source>
</evidence>
<accession>P49647</accession>
<comment type="function">
    <text evidence="1">Produces ATP from ADP in the presence of a proton gradient across the membrane. The catalytic sites are hosted primarily by the beta subunits.</text>
</comment>
<comment type="catalytic activity">
    <reaction evidence="1">
        <text>ATP + H2O + 4 H(+)(in) = ADP + phosphate + 5 H(+)(out)</text>
        <dbReference type="Rhea" id="RHEA:57720"/>
        <dbReference type="ChEBI" id="CHEBI:15377"/>
        <dbReference type="ChEBI" id="CHEBI:15378"/>
        <dbReference type="ChEBI" id="CHEBI:30616"/>
        <dbReference type="ChEBI" id="CHEBI:43474"/>
        <dbReference type="ChEBI" id="CHEBI:456216"/>
        <dbReference type="EC" id="7.1.2.2"/>
    </reaction>
</comment>
<comment type="subunit">
    <text evidence="1">F-type ATPases have 2 components, CF(1) - the catalytic core - and CF(0) - the membrane proton channel. CF(1) has five subunits: alpha(3), beta(3), gamma(1), delta(1), epsilon(1). CF(0) has four main subunits: a(1), b(1), b'(1) and c(9-12).</text>
</comment>
<comment type="subcellular location">
    <subcellularLocation>
        <location evidence="1">Plastid</location>
        <location evidence="1">Chloroplast thylakoid membrane</location>
        <topology evidence="1">Peripheral membrane protein</topology>
    </subcellularLocation>
</comment>
<comment type="similarity">
    <text evidence="1">Belongs to the ATPase alpha/beta chains family.</text>
</comment>
<feature type="chain" id="PRO_0000144534" description="ATP synthase subunit beta, chloroplastic">
    <location>
        <begin position="1"/>
        <end position="475"/>
    </location>
</feature>
<feature type="binding site" evidence="1">
    <location>
        <begin position="156"/>
        <end position="163"/>
    </location>
    <ligand>
        <name>ATP</name>
        <dbReference type="ChEBI" id="CHEBI:30616"/>
    </ligand>
</feature>
<geneLocation type="chloroplast"/>